<gene>
    <name type="primary">VhaA</name>
</gene>
<organism>
    <name type="scientific">Aedes albopictus</name>
    <name type="common">Asian tiger mosquito</name>
    <name type="synonym">Stegomyia albopicta</name>
    <dbReference type="NCBI Taxonomy" id="7160"/>
    <lineage>
        <taxon>Eukaryota</taxon>
        <taxon>Metazoa</taxon>
        <taxon>Ecdysozoa</taxon>
        <taxon>Arthropoda</taxon>
        <taxon>Hexapoda</taxon>
        <taxon>Insecta</taxon>
        <taxon>Pterygota</taxon>
        <taxon>Neoptera</taxon>
        <taxon>Endopterygota</taxon>
        <taxon>Diptera</taxon>
        <taxon>Nematocera</taxon>
        <taxon>Culicoidea</taxon>
        <taxon>Culicidae</taxon>
        <taxon>Culicinae</taxon>
        <taxon>Aedini</taxon>
        <taxon>Aedes</taxon>
        <taxon>Stegomyia</taxon>
    </lineage>
</organism>
<keyword id="KW-0067">ATP-binding</keyword>
<keyword id="KW-0375">Hydrogen ion transport</keyword>
<keyword id="KW-0406">Ion transport</keyword>
<keyword id="KW-0547">Nucleotide-binding</keyword>
<keyword id="KW-1278">Translocase</keyword>
<keyword id="KW-0813">Transport</keyword>
<accession>Q2TJ56</accession>
<protein>
    <recommendedName>
        <fullName>V-type proton ATPase catalytic subunit A</fullName>
        <shortName>V-ATPase subunit A</shortName>
        <ecNumber evidence="3">7.1.2.2</ecNumber>
    </recommendedName>
    <alternativeName>
        <fullName>V-ATPase 69 kDa subunit</fullName>
    </alternativeName>
    <alternativeName>
        <fullName>Vacuolar proton pump subunit alpha</fullName>
    </alternativeName>
</protein>
<comment type="function">
    <text evidence="2 3">Catalytic subunit of the V1 complex of vacuolar(H+)-ATPase (V-ATPase), a multisubunit enzyme composed of a peripheral complex (V1) that hydrolyzes ATP and a membrane integral complex (V0) that translocates protons (By similarity). V-ATPase is responsible for acidifying and maintaining the pH of intracellular compartments and in some cell types, is targeted to the plasma membrane, where it is responsible for acidifying the extracellular environment (By similarity).</text>
</comment>
<comment type="catalytic activity">
    <reaction evidence="3">
        <text>ATP + H2O + 4 H(+)(in) = ADP + phosphate + 5 H(+)(out)</text>
        <dbReference type="Rhea" id="RHEA:57720"/>
        <dbReference type="ChEBI" id="CHEBI:15377"/>
        <dbReference type="ChEBI" id="CHEBI:15378"/>
        <dbReference type="ChEBI" id="CHEBI:30616"/>
        <dbReference type="ChEBI" id="CHEBI:43474"/>
        <dbReference type="ChEBI" id="CHEBI:456216"/>
        <dbReference type="EC" id="7.1.2.2"/>
    </reaction>
</comment>
<comment type="activity regulation">
    <text evidence="1">ATP hydrolysis occurs at the interface between the nucleotide-binding domains of subunits A and B (By similarity). ATP hydrolysis triggers a conformational change in the subunits D and F, which induces a shift of subunit d (By similarity). The c-ring is subsequently rotated and results in a continuous proton translocation across the membrane (By similarity).</text>
</comment>
<comment type="subunit">
    <text evidence="2">V-ATPase is a heteromultimeric enzyme made up of two complexes: the ATP-hydrolytic V1 complex and the proton translocation V0 complex (By similarity). The V1 complex consists of three catalytic AB heterodimers that form a heterohexamer, three peripheral stalks each consisting of EG heterodimers, one central rotor including subunits D and F, and the regulatory subunits C and H (By similarity). The proton translocation complex V0 consists of the proton transport subunit a, a ring of proteolipid subunits c9c'', rotary subunit d, subunits e and f, and the accessory subunits VhaAC45 and ATP6AP2 (By similarity).</text>
</comment>
<comment type="similarity">
    <text evidence="5">Belongs to the ATPase alpha/beta chains family.</text>
</comment>
<evidence type="ECO:0000250" key="1">
    <source>
        <dbReference type="UniProtKB" id="P31404"/>
    </source>
</evidence>
<evidence type="ECO:0000250" key="2">
    <source>
        <dbReference type="UniProtKB" id="P38606"/>
    </source>
</evidence>
<evidence type="ECO:0000250" key="3">
    <source>
        <dbReference type="UniProtKB" id="P50516"/>
    </source>
</evidence>
<evidence type="ECO:0000255" key="4"/>
<evidence type="ECO:0000305" key="5"/>
<feature type="chain" id="PRO_0000284399" description="V-type proton ATPase catalytic subunit A">
    <location>
        <begin position="1"/>
        <end position="614"/>
    </location>
</feature>
<feature type="binding site" evidence="4">
    <location>
        <begin position="247"/>
        <end position="254"/>
    </location>
    <ligand>
        <name>ATP</name>
        <dbReference type="ChEBI" id="CHEBI:30616"/>
    </ligand>
</feature>
<sequence length="614" mass="68229">MSTLKKISDEDRESKFGYVFAVSGPVVTAERMSGSAMYELVRVGYYELVGEIIRLEGDMATIQVYEETSGVTVGDPVLRTGKPLSVELGPGIMGSIFDGIQRPLKDINELTSSIYIPKGVNIPCLSRTQSWGFNPLNVKVGSHITGGDLYGLVHENTLVKHKLLVPPRAKGTVRYIAPPGNYTVDDIILETEFDGEINKWSMLQVWPVRQPRPVTEKLPANHPLLTGQRVLDSLFPCVQGGTTAIPGAFGCGKTVISQALSKYSNSDVIIYVGCGERGNEMSEVLRDFPELSVEIDGVTESIMKRTALVANTSNMPVAAREASIYTGITLSEYFRDMGYNVSMMADSTSRWAEALREISGRLAEMPADSGYPAYLGARLASFYERAGRVKCLGNPEREGSVSIVGAVSPPGGDFSDPVTSATLGIVQVFWGLDKKLAQRKHFPSINWLISYSKYMRALDDFYDKNFQEFVPLRTKVKEILQEEEDLSEIVQLVGKASLAETDKITLEVAKLLKDDFLQQNSYSAYDRFCPFYKTVGMLRNMIGFYDMARHAVETTAQSENKITWNVIRDSMGNILYQLSSMKFKDPVKDGEAKIKADFDQLYEDLQQAFRNLED</sequence>
<proteinExistence type="evidence at transcript level"/>
<dbReference type="EC" id="7.1.2.2" evidence="3"/>
<dbReference type="EMBL" id="AY864912">
    <property type="protein sequence ID" value="AAX58113.1"/>
    <property type="molecule type" value="mRNA"/>
</dbReference>
<dbReference type="RefSeq" id="XP_019537311.1">
    <property type="nucleotide sequence ID" value="XM_019681766.1"/>
</dbReference>
<dbReference type="SMR" id="Q2TJ56"/>
<dbReference type="EnsemblMetazoa" id="AALF006486-RA">
    <property type="protein sequence ID" value="AALF006486-PA"/>
    <property type="gene ID" value="AALF006486"/>
</dbReference>
<dbReference type="GeneID" id="109419385"/>
<dbReference type="KEGG" id="aalb:109419385"/>
<dbReference type="VEuPathDB" id="VectorBase:AALC636_017108"/>
<dbReference type="VEuPathDB" id="VectorBase:AALC636_031209"/>
<dbReference type="VEuPathDB" id="VectorBase:AALF006486"/>
<dbReference type="VEuPathDB" id="VectorBase:AALFPA_045970"/>
<dbReference type="OMA" id="RIVKTFW"/>
<dbReference type="OrthoDB" id="1676488at2759"/>
<dbReference type="Proteomes" id="UP000069940">
    <property type="component" value="Unassembled WGS sequence"/>
</dbReference>
<dbReference type="GO" id="GO:0005765">
    <property type="term" value="C:lysosomal membrane"/>
    <property type="evidence" value="ECO:0007669"/>
    <property type="project" value="TreeGrafter"/>
</dbReference>
<dbReference type="GO" id="GO:0033180">
    <property type="term" value="C:proton-transporting V-type ATPase, V1 domain"/>
    <property type="evidence" value="ECO:0007669"/>
    <property type="project" value="InterPro"/>
</dbReference>
<dbReference type="GO" id="GO:0005524">
    <property type="term" value="F:ATP binding"/>
    <property type="evidence" value="ECO:0007669"/>
    <property type="project" value="UniProtKB-KW"/>
</dbReference>
<dbReference type="GO" id="GO:0016887">
    <property type="term" value="F:ATP hydrolysis activity"/>
    <property type="evidence" value="ECO:0007669"/>
    <property type="project" value="InterPro"/>
</dbReference>
<dbReference type="GO" id="GO:0046961">
    <property type="term" value="F:proton-transporting ATPase activity, rotational mechanism"/>
    <property type="evidence" value="ECO:0007669"/>
    <property type="project" value="InterPro"/>
</dbReference>
<dbReference type="GO" id="GO:0046034">
    <property type="term" value="P:ATP metabolic process"/>
    <property type="evidence" value="ECO:0007669"/>
    <property type="project" value="InterPro"/>
</dbReference>
<dbReference type="CDD" id="cd18111">
    <property type="entry name" value="ATP-synt_V_A-type_alpha_C"/>
    <property type="match status" value="1"/>
</dbReference>
<dbReference type="CDD" id="cd18119">
    <property type="entry name" value="ATP-synt_V_A-type_alpha_N"/>
    <property type="match status" value="1"/>
</dbReference>
<dbReference type="CDD" id="cd01134">
    <property type="entry name" value="V_A-ATPase_A"/>
    <property type="match status" value="1"/>
</dbReference>
<dbReference type="FunFam" id="1.10.1140.10:FF:000002">
    <property type="entry name" value="V-type proton ATPase catalytic subunit A"/>
    <property type="match status" value="1"/>
</dbReference>
<dbReference type="FunFam" id="2.40.30.20:FF:000002">
    <property type="entry name" value="V-type proton ATPase catalytic subunit A"/>
    <property type="match status" value="1"/>
</dbReference>
<dbReference type="FunFam" id="2.40.50.100:FF:000008">
    <property type="entry name" value="V-type proton ATPase catalytic subunit A"/>
    <property type="match status" value="1"/>
</dbReference>
<dbReference type="FunFam" id="3.40.50.300:FF:000052">
    <property type="entry name" value="V-type proton ATPase catalytic subunit A"/>
    <property type="match status" value="1"/>
</dbReference>
<dbReference type="Gene3D" id="2.40.30.20">
    <property type="match status" value="1"/>
</dbReference>
<dbReference type="Gene3D" id="2.40.50.100">
    <property type="match status" value="1"/>
</dbReference>
<dbReference type="Gene3D" id="1.10.1140.10">
    <property type="entry name" value="Bovine Mitochondrial F1-atpase, Atp Synthase Beta Chain, Chain D, domain 3"/>
    <property type="match status" value="1"/>
</dbReference>
<dbReference type="Gene3D" id="3.40.50.300">
    <property type="entry name" value="P-loop containing nucleotide triphosphate hydrolases"/>
    <property type="match status" value="1"/>
</dbReference>
<dbReference type="HAMAP" id="MF_00309">
    <property type="entry name" value="ATP_synth_A_arch"/>
    <property type="match status" value="1"/>
</dbReference>
<dbReference type="InterPro" id="IPR055190">
    <property type="entry name" value="ATP-synt_VA_C"/>
</dbReference>
<dbReference type="InterPro" id="IPR031686">
    <property type="entry name" value="ATP-synth_a_Xtn"/>
</dbReference>
<dbReference type="InterPro" id="IPR023366">
    <property type="entry name" value="ATP_synth_asu-like_sf"/>
</dbReference>
<dbReference type="InterPro" id="IPR020003">
    <property type="entry name" value="ATPase_a/bsu_AS"/>
</dbReference>
<dbReference type="InterPro" id="IPR004100">
    <property type="entry name" value="ATPase_F1/V1/A1_a/bsu_N"/>
</dbReference>
<dbReference type="InterPro" id="IPR036121">
    <property type="entry name" value="ATPase_F1/V1/A1_a/bsu_N_sf"/>
</dbReference>
<dbReference type="InterPro" id="IPR000194">
    <property type="entry name" value="ATPase_F1/V1/A1_a/bsu_nucl-bd"/>
</dbReference>
<dbReference type="InterPro" id="IPR024034">
    <property type="entry name" value="ATPase_F1/V1_b/a_C"/>
</dbReference>
<dbReference type="InterPro" id="IPR005725">
    <property type="entry name" value="ATPase_V1-cplx_asu"/>
</dbReference>
<dbReference type="InterPro" id="IPR027417">
    <property type="entry name" value="P-loop_NTPase"/>
</dbReference>
<dbReference type="InterPro" id="IPR022878">
    <property type="entry name" value="V-ATPase_asu"/>
</dbReference>
<dbReference type="NCBIfam" id="NF003220">
    <property type="entry name" value="PRK04192.1"/>
    <property type="match status" value="1"/>
</dbReference>
<dbReference type="NCBIfam" id="TIGR01042">
    <property type="entry name" value="V-ATPase_V1_A"/>
    <property type="match status" value="1"/>
</dbReference>
<dbReference type="PANTHER" id="PTHR43607:SF1">
    <property type="entry name" value="H(+)-TRANSPORTING TWO-SECTOR ATPASE"/>
    <property type="match status" value="1"/>
</dbReference>
<dbReference type="PANTHER" id="PTHR43607">
    <property type="entry name" value="V-TYPE PROTON ATPASE CATALYTIC SUBUNIT A"/>
    <property type="match status" value="1"/>
</dbReference>
<dbReference type="Pfam" id="PF00006">
    <property type="entry name" value="ATP-synt_ab"/>
    <property type="match status" value="1"/>
</dbReference>
<dbReference type="Pfam" id="PF02874">
    <property type="entry name" value="ATP-synt_ab_N"/>
    <property type="match status" value="1"/>
</dbReference>
<dbReference type="Pfam" id="PF16886">
    <property type="entry name" value="ATP-synt_ab_Xtn"/>
    <property type="match status" value="1"/>
</dbReference>
<dbReference type="Pfam" id="PF22919">
    <property type="entry name" value="ATP-synt_VA_C"/>
    <property type="match status" value="1"/>
</dbReference>
<dbReference type="SUPFAM" id="SSF47917">
    <property type="entry name" value="C-terminal domain of alpha and beta subunits of F1 ATP synthase"/>
    <property type="match status" value="1"/>
</dbReference>
<dbReference type="SUPFAM" id="SSF50615">
    <property type="entry name" value="N-terminal domain of alpha and beta subunits of F1 ATP synthase"/>
    <property type="match status" value="1"/>
</dbReference>
<dbReference type="SUPFAM" id="SSF52540">
    <property type="entry name" value="P-loop containing nucleoside triphosphate hydrolases"/>
    <property type="match status" value="1"/>
</dbReference>
<dbReference type="PROSITE" id="PS00152">
    <property type="entry name" value="ATPASE_ALPHA_BETA"/>
    <property type="match status" value="1"/>
</dbReference>
<name>VATA_AEDAL</name>
<reference key="1">
    <citation type="journal article" date="2006" name="J. Eukaryot. Microbiol.">
        <title>Intestinal expression of H+ V-ATPase in the mosquito Aedes albopictus is tightly associated with gregarine infection.</title>
        <authorList>
            <person name="Huang C.G."/>
            <person name="Tsai K.H."/>
            <person name="Wu W.J."/>
            <person name="Chen W.J."/>
        </authorList>
    </citation>
    <scope>NUCLEOTIDE SEQUENCE [MRNA]</scope>
</reference>